<dbReference type="EMBL" id="X69198">
    <property type="protein sequence ID" value="CAA48958.1"/>
    <property type="molecule type" value="Genomic_DNA"/>
</dbReference>
<dbReference type="PIR" id="G36838">
    <property type="entry name" value="G36838"/>
</dbReference>
<dbReference type="RefSeq" id="NP_042061.1">
    <property type="nucleotide sequence ID" value="NC_001611.1"/>
</dbReference>
<dbReference type="GeneID" id="1486482"/>
<dbReference type="KEGG" id="vg:1486482"/>
<dbReference type="Proteomes" id="UP000002060">
    <property type="component" value="Segment"/>
</dbReference>
<dbReference type="GO" id="GO:0042025">
    <property type="term" value="C:host cell nucleus"/>
    <property type="evidence" value="ECO:0007669"/>
    <property type="project" value="UniProtKB-SubCell"/>
</dbReference>
<dbReference type="GO" id="GO:0039548">
    <property type="term" value="P:symbiont-mediated suppression of host cytoplasmic pattern recognition receptor signaling pathway via inhibition of IRF3 activity"/>
    <property type="evidence" value="ECO:0007669"/>
    <property type="project" value="UniProtKB-KW"/>
</dbReference>
<dbReference type="InterPro" id="IPR022819">
    <property type="entry name" value="Poxvirus_Bcl-2-like"/>
</dbReference>
<dbReference type="Pfam" id="PF06227">
    <property type="entry name" value="Poxv_Bcl-2-like"/>
    <property type="match status" value="1"/>
</dbReference>
<reference key="1">
    <citation type="journal article" date="1993" name="FEBS Lett.">
        <title>Genes of variola and vaccinia viruses necessary to overcome the host protective mechanisms.</title>
        <authorList>
            <person name="Shchelkunov S.N."/>
            <person name="Blinov V.M."/>
            <person name="Sandakhchiev L.S."/>
        </authorList>
    </citation>
    <scope>NUCLEOTIDE SEQUENCE [GENOMIC DNA]</scope>
</reference>
<keyword id="KW-0244">Early protein</keyword>
<keyword id="KW-1048">Host nucleus</keyword>
<keyword id="KW-0945">Host-virus interaction</keyword>
<keyword id="KW-1090">Inhibition of host innate immune response by virus</keyword>
<keyword id="KW-1092">Inhibition of host IRF3 by virus</keyword>
<keyword id="KW-1113">Inhibition of host RLR pathway by virus</keyword>
<keyword id="KW-1185">Reference proteome</keyword>
<keyword id="KW-0899">Viral immunoevasion</keyword>
<organismHost>
    <name type="scientific">Homo sapiens</name>
    <name type="common">Human</name>
    <dbReference type="NCBI Taxonomy" id="9606"/>
</organismHost>
<organism>
    <name type="scientific">Variola virus (isolate Human/India/Ind3/1967)</name>
    <name type="common">VARV</name>
    <name type="synonym">Smallpox virus</name>
    <dbReference type="NCBI Taxonomy" id="587200"/>
    <lineage>
        <taxon>Viruses</taxon>
        <taxon>Varidnaviria</taxon>
        <taxon>Bamfordvirae</taxon>
        <taxon>Nucleocytoviricota</taxon>
        <taxon>Pokkesviricetes</taxon>
        <taxon>Chitovirales</taxon>
        <taxon>Poxviridae</taxon>
        <taxon>Chordopoxvirinae</taxon>
        <taxon>Orthopoxvirus</taxon>
        <taxon>Variola virus</taxon>
    </lineage>
</organism>
<name>PG036_VAR67</name>
<protein>
    <recommendedName>
        <fullName>Protein OPG036</fullName>
    </recommendedName>
    <alternativeName>
        <fullName>Protein N2</fullName>
    </alternativeName>
</protein>
<comment type="function">
    <text evidence="1">Plays a role in the inhibition of host innate immune response. Within the host nucleus, inhibits activation of interferon-beta promoter by inhibiting IRF3 activation.</text>
</comment>
<comment type="subcellular location">
    <subcellularLocation>
        <location evidence="1">Host nucleus</location>
    </subcellularLocation>
</comment>
<comment type="induction">
    <text evidence="1">Expressed in the early phase of the viral replicative cycle.</text>
</comment>
<comment type="similarity">
    <text evidence="2">Belongs to the poxviridae OPG036 family.</text>
</comment>
<gene>
    <name type="primary">OPG036</name>
    <name type="synonym">N2L</name>
    <name type="synonym">P2L</name>
</gene>
<accession>P0DSQ1</accession>
<accession>P34019</accession>
<feature type="chain" id="PRO_0000099637" description="Protein OPG036">
    <location>
        <begin position="1"/>
        <end position="177"/>
    </location>
</feature>
<sequence length="177" mass="21023">MSSSTMDNNEPKVLEMVYDSPILPEGSSMDPNIINCINRHINMCLQHTYSSSIIAILDRFLMMNKDELNNTQCHIIKEFMTYEQMAIDHYGGYVNAILYQIRKRPNQHHTIDLFKKIKRTRYDTFKVDPVEFVKKVIGFVSILNKYKPVYSYVLYENVLYDELKCFIDYVETKYFQN</sequence>
<proteinExistence type="inferred from homology"/>
<evidence type="ECO:0000250" key="1">
    <source>
        <dbReference type="UniProtKB" id="P14357"/>
    </source>
</evidence>
<evidence type="ECO:0000305" key="2"/>